<evidence type="ECO:0000250" key="1">
    <source>
        <dbReference type="UniProtKB" id="P41814"/>
    </source>
</evidence>
<evidence type="ECO:0000250" key="2">
    <source>
        <dbReference type="UniProtKB" id="Q9UJA5"/>
    </source>
</evidence>
<evidence type="ECO:0000256" key="3">
    <source>
        <dbReference type="SAM" id="MobiDB-lite"/>
    </source>
</evidence>
<evidence type="ECO:0000305" key="4"/>
<comment type="function">
    <text evidence="2">Substrate-binding subunit of tRNA (adenine-N(1)-)-methyltransferase, which catalyzes the formation of N(1)-methyladenine at position 58 (m1A58) in initiator methionyl-tRNA. Together with the TRMT61A catalytic subunit, part of a mRNA N(1)-methyltransferase complex that mediates methylation of adenosine residues at the N(1) position of a small subset of mRNAs: N(1) methylation takes place in tRNA T-loop-like structures of mRNAs and is only present at low stoichiometries.</text>
</comment>
<comment type="subunit">
    <text evidence="2">Heterotetramer; composed of two copies of TRMT6 and two copies of TRMT61A.</text>
</comment>
<comment type="subcellular location">
    <subcellularLocation>
        <location evidence="1">Nucleus</location>
    </subcellularLocation>
</comment>
<comment type="similarity">
    <text evidence="4">Belongs to the TRM6/GCD10 family.</text>
</comment>
<sequence length="497" mass="55979">MESSEDQPGPQPQYPGNHCIRDGDFVVLKREDVFKAVQVQRRKKVTFEKQWFYLDNIIGHSYGTTFEVTNGGSLQPKKKKEEPTSETKEAGTDNRNIIDDGKSQKLTQDDIKALKDKGIKGEEIVQQLIENSTTFRDKTEFAQDKYIKKKKKKYEAMITVVKPSTRILSVMYYAREPGKINHMRYDTLAQMLTLGNIRAGNKMIVMETCAGLVLGAMMERMGGFGSIIQLYPGGGPVRAATACFGFPKSFLSGLYEFPLNKVDSLLNGTFSAEMLSSEPKDIASVEESNGTLEEKQTSEQENEDSIAEAPESNHPEEQERMEIVSQDPDYKEPKESGSKKDYIQEKQRRQEEQKKRHLEAAALLSERNADGLIVASRFHPTPLLLSLLDFVAPSRPFVVYCQYKEPLLECYTKLRERGGVINLRLSETWLRNYQVLPDRSHPKLLMSGGGGYLLSGFTVAMDNLKADPSLKSSTSTLESHKTEEPAAKKRKCPESDS</sequence>
<protein>
    <recommendedName>
        <fullName evidence="2">tRNA (adenine(58)-N(1))-methyltransferase non-catalytic subunit TRM6</fullName>
    </recommendedName>
    <alternativeName>
        <fullName evidence="2">mRNA methyladenosine-N(1)-methyltransferase non-catalytic subunit TRM6</fullName>
    </alternativeName>
    <alternativeName>
        <fullName>tRNA(m1A58)-methyltransferase subunit TRM6</fullName>
        <shortName evidence="2">tRNA(m1A58)MTase subunit TRM6</shortName>
    </alternativeName>
</protein>
<feature type="chain" id="PRO_0000233097" description="tRNA (adenine(58)-N(1))-methyltransferase non-catalytic subunit TRM6">
    <location>
        <begin position="1"/>
        <end position="497"/>
    </location>
</feature>
<feature type="region of interest" description="Disordered" evidence="3">
    <location>
        <begin position="69"/>
        <end position="102"/>
    </location>
</feature>
<feature type="region of interest" description="Substrate" evidence="2">
    <location>
        <begin position="94"/>
        <end position="104"/>
    </location>
</feature>
<feature type="region of interest" description="Substrate" evidence="2">
    <location>
        <begin position="145"/>
        <end position="154"/>
    </location>
</feature>
<feature type="region of interest" description="Substrate" evidence="2">
    <location>
        <begin position="175"/>
        <end position="182"/>
    </location>
</feature>
<feature type="region of interest" description="Disordered" evidence="3">
    <location>
        <begin position="276"/>
        <end position="354"/>
    </location>
</feature>
<feature type="region of interest" description="Substrate" evidence="2">
    <location>
        <begin position="415"/>
        <end position="423"/>
    </location>
</feature>
<feature type="region of interest" description="Substrate" evidence="2">
    <location>
        <begin position="434"/>
        <end position="441"/>
    </location>
</feature>
<feature type="region of interest" description="Disordered" evidence="3">
    <location>
        <begin position="468"/>
        <end position="497"/>
    </location>
</feature>
<feature type="compositionally biased region" description="Basic and acidic residues" evidence="3">
    <location>
        <begin position="79"/>
        <end position="102"/>
    </location>
</feature>
<feature type="compositionally biased region" description="Basic and acidic residues" evidence="3">
    <location>
        <begin position="311"/>
        <end position="354"/>
    </location>
</feature>
<feature type="compositionally biased region" description="Basic and acidic residues" evidence="3">
    <location>
        <begin position="478"/>
        <end position="497"/>
    </location>
</feature>
<feature type="binding site" evidence="2">
    <location>
        <position position="349"/>
    </location>
    <ligand>
        <name>substrate</name>
    </ligand>
</feature>
<feature type="binding site" evidence="2">
    <location>
        <position position="377"/>
    </location>
    <ligand>
        <name>substrate</name>
    </ligand>
</feature>
<feature type="modified residue" description="Phosphothreonine" evidence="2">
    <location>
        <position position="107"/>
    </location>
</feature>
<feature type="modified residue" description="Phosphoserine" evidence="2">
    <location>
        <position position="298"/>
    </location>
</feature>
<feature type="modified residue" description="Phosphoserine" evidence="2">
    <location>
        <position position="305"/>
    </location>
</feature>
<name>TRM6_BOVIN</name>
<reference key="1">
    <citation type="submission" date="2005-12" db="EMBL/GenBank/DDBJ databases">
        <authorList>
            <consortium name="NIH - Mammalian Gene Collection (MGC) project"/>
        </authorList>
    </citation>
    <scope>NUCLEOTIDE SEQUENCE [LARGE SCALE MRNA]</scope>
    <source>
        <strain>Crossbred X Angus</strain>
        <tissue>Liver</tissue>
    </source>
</reference>
<keyword id="KW-0539">Nucleus</keyword>
<keyword id="KW-0597">Phosphoprotein</keyword>
<keyword id="KW-1185">Reference proteome</keyword>
<keyword id="KW-0819">tRNA processing</keyword>
<gene>
    <name type="primary">TRMT6</name>
    <name type="synonym">TRM6</name>
</gene>
<organism>
    <name type="scientific">Bos taurus</name>
    <name type="common">Bovine</name>
    <dbReference type="NCBI Taxonomy" id="9913"/>
    <lineage>
        <taxon>Eukaryota</taxon>
        <taxon>Metazoa</taxon>
        <taxon>Chordata</taxon>
        <taxon>Craniata</taxon>
        <taxon>Vertebrata</taxon>
        <taxon>Euteleostomi</taxon>
        <taxon>Mammalia</taxon>
        <taxon>Eutheria</taxon>
        <taxon>Laurasiatheria</taxon>
        <taxon>Artiodactyla</taxon>
        <taxon>Ruminantia</taxon>
        <taxon>Pecora</taxon>
        <taxon>Bovidae</taxon>
        <taxon>Bovinae</taxon>
        <taxon>Bos</taxon>
    </lineage>
</organism>
<proteinExistence type="evidence at transcript level"/>
<accession>Q2T9V5</accession>
<dbReference type="EMBL" id="BC111249">
    <property type="protein sequence ID" value="AAI11250.1"/>
    <property type="molecule type" value="mRNA"/>
</dbReference>
<dbReference type="RefSeq" id="NP_001033129.1">
    <property type="nucleotide sequence ID" value="NM_001038040.2"/>
</dbReference>
<dbReference type="SMR" id="Q2T9V5"/>
<dbReference type="FunCoup" id="Q2T9V5">
    <property type="interactions" value="3835"/>
</dbReference>
<dbReference type="STRING" id="9913.ENSBTAP00000001734"/>
<dbReference type="PaxDb" id="9913-ENSBTAP00000001734"/>
<dbReference type="GeneID" id="505816"/>
<dbReference type="KEGG" id="bta:505816"/>
<dbReference type="CTD" id="51605"/>
<dbReference type="VEuPathDB" id="HostDB:ENSBTAG00000001314"/>
<dbReference type="eggNOG" id="KOG1416">
    <property type="taxonomic scope" value="Eukaryota"/>
</dbReference>
<dbReference type="HOGENOM" id="CLU_010916_0_1_1"/>
<dbReference type="InParanoid" id="Q2T9V5"/>
<dbReference type="OMA" id="TRCRPYQ"/>
<dbReference type="OrthoDB" id="10254665at2759"/>
<dbReference type="TreeFam" id="TF314835"/>
<dbReference type="Proteomes" id="UP000009136">
    <property type="component" value="Chromosome 13"/>
</dbReference>
<dbReference type="Bgee" id="ENSBTAG00000001314">
    <property type="expression patterns" value="Expressed in oocyte and 107 other cell types or tissues"/>
</dbReference>
<dbReference type="GO" id="GO:0005634">
    <property type="term" value="C:nucleus"/>
    <property type="evidence" value="ECO:0000318"/>
    <property type="project" value="GO_Central"/>
</dbReference>
<dbReference type="GO" id="GO:0031515">
    <property type="term" value="C:tRNA (m1A) methyltransferase complex"/>
    <property type="evidence" value="ECO:0000318"/>
    <property type="project" value="GO_Central"/>
</dbReference>
<dbReference type="GO" id="GO:0006397">
    <property type="term" value="P:mRNA processing"/>
    <property type="evidence" value="ECO:0000250"/>
    <property type="project" value="UniProtKB"/>
</dbReference>
<dbReference type="GO" id="GO:0030488">
    <property type="term" value="P:tRNA methylation"/>
    <property type="evidence" value="ECO:0007669"/>
    <property type="project" value="InterPro"/>
</dbReference>
<dbReference type="InterPro" id="IPR017423">
    <property type="entry name" value="TRM6"/>
</dbReference>
<dbReference type="PANTHER" id="PTHR12945">
    <property type="entry name" value="TRANSLATION INITIATION FACTOR EIF3-RELATED"/>
    <property type="match status" value="1"/>
</dbReference>
<dbReference type="PANTHER" id="PTHR12945:SF0">
    <property type="entry name" value="TRNA (ADENINE(58)-N(1))-METHYLTRANSFERASE NON-CATALYTIC SUBUNIT TRM6"/>
    <property type="match status" value="1"/>
</dbReference>
<dbReference type="Pfam" id="PF04189">
    <property type="entry name" value="Gcd10p"/>
    <property type="match status" value="1"/>
</dbReference>
<dbReference type="PIRSF" id="PIRSF038170">
    <property type="entry name" value="tRNA_m1A_mtfrase"/>
    <property type="match status" value="1"/>
</dbReference>